<dbReference type="EMBL" id="X87371">
    <property type="protein sequence ID" value="CAA60811.1"/>
    <property type="molecule type" value="Genomic_DNA"/>
</dbReference>
<dbReference type="EMBL" id="Z49419">
    <property type="protein sequence ID" value="CAA89439.1"/>
    <property type="molecule type" value="Genomic_DNA"/>
</dbReference>
<dbReference type="EMBL" id="AY557844">
    <property type="protein sequence ID" value="AAS56170.1"/>
    <property type="molecule type" value="Genomic_DNA"/>
</dbReference>
<dbReference type="EMBL" id="BK006943">
    <property type="protein sequence ID" value="DAA08657.1"/>
    <property type="molecule type" value="Genomic_DNA"/>
</dbReference>
<dbReference type="PIR" id="S55169">
    <property type="entry name" value="S55169"/>
</dbReference>
<dbReference type="SMR" id="P47009"/>
<dbReference type="BioGRID" id="33614">
    <property type="interactions" value="36"/>
</dbReference>
<dbReference type="FunCoup" id="P47009">
    <property type="interactions" value="3"/>
</dbReference>
<dbReference type="MINT" id="P47009"/>
<dbReference type="STRING" id="4932.YJL144W"/>
<dbReference type="PaxDb" id="4932-YJL144W"/>
<dbReference type="PeptideAtlas" id="P47009"/>
<dbReference type="EnsemblFungi" id="YJL144W_mRNA">
    <property type="protein sequence ID" value="YJL144W"/>
    <property type="gene ID" value="YJL144W"/>
</dbReference>
<dbReference type="KEGG" id="sce:YJL144W"/>
<dbReference type="AGR" id="SGD:S000003680"/>
<dbReference type="SGD" id="S000003680">
    <property type="gene designation" value="YJL144W"/>
</dbReference>
<dbReference type="VEuPathDB" id="FungiDB:YJL144W"/>
<dbReference type="HOGENOM" id="CLU_2251603_0_0_1"/>
<dbReference type="InParanoid" id="P47009"/>
<dbReference type="OMA" id="NENTHPG"/>
<dbReference type="OrthoDB" id="4061920at2759"/>
<dbReference type="BioCyc" id="YEAST:G3O-31588-MONOMER"/>
<dbReference type="BioGRID-ORCS" id="853297">
    <property type="hits" value="7 hits in 10 CRISPR screens"/>
</dbReference>
<dbReference type="PRO" id="PR:P47009"/>
<dbReference type="Proteomes" id="UP000002311">
    <property type="component" value="Chromosome X"/>
</dbReference>
<dbReference type="RNAct" id="P47009">
    <property type="molecule type" value="protein"/>
</dbReference>
<dbReference type="GO" id="GO:0005737">
    <property type="term" value="C:cytoplasm"/>
    <property type="evidence" value="ECO:0007005"/>
    <property type="project" value="SGD"/>
</dbReference>
<dbReference type="GO" id="GO:0055106">
    <property type="term" value="F:ubiquitin-protein transferase regulator activity"/>
    <property type="evidence" value="ECO:0000315"/>
    <property type="project" value="SGD"/>
</dbReference>
<dbReference type="GO" id="GO:0033554">
    <property type="term" value="P:cellular response to stress"/>
    <property type="evidence" value="ECO:0000315"/>
    <property type="project" value="SGD"/>
</dbReference>
<dbReference type="GO" id="GO:0042631">
    <property type="term" value="P:cellular response to water deprivation"/>
    <property type="evidence" value="ECO:0000315"/>
    <property type="project" value="SGD"/>
</dbReference>
<dbReference type="GO" id="GO:0120174">
    <property type="term" value="P:stress-induced homeostatically regulated protein degradation pathway"/>
    <property type="evidence" value="ECO:0000315"/>
    <property type="project" value="SGD"/>
</dbReference>
<gene>
    <name type="ordered locus">YJL144W</name>
    <name type="ORF">J0646</name>
</gene>
<keyword id="KW-1185">Reference proteome</keyword>
<evidence type="ECO:0000256" key="1">
    <source>
        <dbReference type="SAM" id="MobiDB-lite"/>
    </source>
</evidence>
<evidence type="ECO:0000269" key="2">
    <source>
    </source>
</evidence>
<proteinExistence type="evidence at protein level"/>
<reference key="1">
    <citation type="journal article" date="1996" name="Yeast">
        <title>Sequence analysis of a 40.7 kb segment from the left arm of yeast chromosome X reveals 14 known genes and 13 new open reading frames including homologues of genes clustered on the right arm of chromosome XI.</title>
        <authorList>
            <person name="Katsoulou C."/>
            <person name="Tzermia M."/>
            <person name="Tavernarakis N."/>
            <person name="Alexandraki D."/>
        </authorList>
    </citation>
    <scope>NUCLEOTIDE SEQUENCE [GENOMIC DNA]</scope>
    <source>
        <strain>ATCC 96604 / S288c / FY1679</strain>
    </source>
</reference>
<reference key="2">
    <citation type="journal article" date="1996" name="EMBO J.">
        <title>Complete nucleotide sequence of Saccharomyces cerevisiae chromosome X.</title>
        <authorList>
            <person name="Galibert F."/>
            <person name="Alexandraki D."/>
            <person name="Baur A."/>
            <person name="Boles E."/>
            <person name="Chalwatzis N."/>
            <person name="Chuat J.-C."/>
            <person name="Coster F."/>
            <person name="Cziepluch C."/>
            <person name="de Haan M."/>
            <person name="Domdey H."/>
            <person name="Durand P."/>
            <person name="Entian K.-D."/>
            <person name="Gatius M."/>
            <person name="Goffeau A."/>
            <person name="Grivell L.A."/>
            <person name="Hennemann A."/>
            <person name="Herbert C.J."/>
            <person name="Heumann K."/>
            <person name="Hilger F."/>
            <person name="Hollenberg C.P."/>
            <person name="Huang M.-E."/>
            <person name="Jacq C."/>
            <person name="Jauniaux J.-C."/>
            <person name="Katsoulou C."/>
            <person name="Kirchrath L."/>
            <person name="Kleine K."/>
            <person name="Kordes E."/>
            <person name="Koetter P."/>
            <person name="Liebl S."/>
            <person name="Louis E.J."/>
            <person name="Manus V."/>
            <person name="Mewes H.-W."/>
            <person name="Miosga T."/>
            <person name="Obermaier B."/>
            <person name="Perea J."/>
            <person name="Pohl T.M."/>
            <person name="Portetelle D."/>
            <person name="Pujol A."/>
            <person name="Purnelle B."/>
            <person name="Ramezani Rad M."/>
            <person name="Rasmussen S.W."/>
            <person name="Rose M."/>
            <person name="Rossau R."/>
            <person name="Schaaff-Gerstenschlaeger I."/>
            <person name="Smits P.H.M."/>
            <person name="Scarcez T."/>
            <person name="Soriano N."/>
            <person name="To Van D."/>
            <person name="Tzermia M."/>
            <person name="Van Broekhoven A."/>
            <person name="Vandenbol M."/>
            <person name="Wedler H."/>
            <person name="von Wettstein D."/>
            <person name="Wambutt R."/>
            <person name="Zagulski M."/>
            <person name="Zollner A."/>
            <person name="Karpfinger-Hartl L."/>
        </authorList>
    </citation>
    <scope>NUCLEOTIDE SEQUENCE [LARGE SCALE GENOMIC DNA]</scope>
    <source>
        <strain>ATCC 204508 / S288c</strain>
    </source>
</reference>
<reference key="3">
    <citation type="journal article" date="2014" name="G3 (Bethesda)">
        <title>The reference genome sequence of Saccharomyces cerevisiae: Then and now.</title>
        <authorList>
            <person name="Engel S.R."/>
            <person name="Dietrich F.S."/>
            <person name="Fisk D.G."/>
            <person name="Binkley G."/>
            <person name="Balakrishnan R."/>
            <person name="Costanzo M.C."/>
            <person name="Dwight S.S."/>
            <person name="Hitz B.C."/>
            <person name="Karra K."/>
            <person name="Nash R.S."/>
            <person name="Weng S."/>
            <person name="Wong E.D."/>
            <person name="Lloyd P."/>
            <person name="Skrzypek M.S."/>
            <person name="Miyasato S.R."/>
            <person name="Simison M."/>
            <person name="Cherry J.M."/>
        </authorList>
    </citation>
    <scope>GENOME REANNOTATION</scope>
    <source>
        <strain>ATCC 204508 / S288c</strain>
    </source>
</reference>
<reference key="4">
    <citation type="journal article" date="2007" name="Genome Res.">
        <title>Approaching a complete repository of sequence-verified protein-encoding clones for Saccharomyces cerevisiae.</title>
        <authorList>
            <person name="Hu Y."/>
            <person name="Rolfs A."/>
            <person name="Bhullar B."/>
            <person name="Murthy T.V.S."/>
            <person name="Zhu C."/>
            <person name="Berger M.F."/>
            <person name="Camargo A.A."/>
            <person name="Kelley F."/>
            <person name="McCarron S."/>
            <person name="Jepson D."/>
            <person name="Richardson A."/>
            <person name="Raphael J."/>
            <person name="Moreira D."/>
            <person name="Taycher E."/>
            <person name="Zuo D."/>
            <person name="Mohr S."/>
            <person name="Kane M.F."/>
            <person name="Williamson J."/>
            <person name="Simpson A.J.G."/>
            <person name="Bulyk M.L."/>
            <person name="Harlow E."/>
            <person name="Marsischky G."/>
            <person name="Kolodner R.D."/>
            <person name="LaBaer J."/>
        </authorList>
    </citation>
    <scope>NUCLEOTIDE SEQUENCE [GENOMIC DNA]</scope>
    <source>
        <strain>ATCC 204508 / S288c</strain>
    </source>
</reference>
<reference key="5">
    <citation type="journal article" date="2003" name="Nature">
        <title>Global analysis of protein expression in yeast.</title>
        <authorList>
            <person name="Ghaemmaghami S."/>
            <person name="Huh W.-K."/>
            <person name="Bower K."/>
            <person name="Howson R.W."/>
            <person name="Belle A."/>
            <person name="Dephoure N."/>
            <person name="O'Shea E.K."/>
            <person name="Weissman J.S."/>
        </authorList>
    </citation>
    <scope>LEVEL OF PROTEIN EXPRESSION [LARGE SCALE ANALYSIS]</scope>
</reference>
<comment type="miscellaneous">
    <text evidence="2">Present with 149 molecules/cell in log phase SD medium.</text>
</comment>
<accession>P47009</accession>
<accession>D6VW41</accession>
<protein>
    <recommendedName>
        <fullName>Uncharacterized protein YJL144W</fullName>
    </recommendedName>
</protein>
<sequence>MLRRETSTIYRTHKKSNSSILRSQRDQTRVDSLVEESPMGDFGINNQPTQPGVIYYFVELTNLGIQENTSSNNNNNNNHGDDENGSRYGHGSSLGGDVHSRRCS</sequence>
<feature type="chain" id="PRO_0000203034" description="Uncharacterized protein YJL144W">
    <location>
        <begin position="1"/>
        <end position="104"/>
    </location>
</feature>
<feature type="region of interest" description="Disordered" evidence="1">
    <location>
        <begin position="1"/>
        <end position="48"/>
    </location>
</feature>
<feature type="region of interest" description="Disordered" evidence="1">
    <location>
        <begin position="66"/>
        <end position="104"/>
    </location>
</feature>
<name>YJO4_YEAST</name>
<organism>
    <name type="scientific">Saccharomyces cerevisiae (strain ATCC 204508 / S288c)</name>
    <name type="common">Baker's yeast</name>
    <dbReference type="NCBI Taxonomy" id="559292"/>
    <lineage>
        <taxon>Eukaryota</taxon>
        <taxon>Fungi</taxon>
        <taxon>Dikarya</taxon>
        <taxon>Ascomycota</taxon>
        <taxon>Saccharomycotina</taxon>
        <taxon>Saccharomycetes</taxon>
        <taxon>Saccharomycetales</taxon>
        <taxon>Saccharomycetaceae</taxon>
        <taxon>Saccharomyces</taxon>
    </lineage>
</organism>